<comment type="function">
    <text evidence="6">MFS transporter; part of the satratoxin SC3 cluster involved in the biosynthesis of satratoxins, trichothecene mycotoxins that are associated with human food poisonings (PubMed:25015739). Satratoxins are suggested to be made by products of multiple gene clusters (SC1, SC2 and SC3) that encode 21 proteins in all, including polyketide synthases, acetyltransferases, and other enzymes expected to modify the trichothecene skeleton (PubMed:25015739). SC1 encodes 10 proteins, SAT1 to SAT10 (PubMed:25015739). The largest are SAT8, which encodes a putative polyketide synthase (PKS) with a conventional non-reducing architecture, and SAT10, a putative protein containing four ankyrin repeats and thus may be involved in protein scaffolding (PubMed:25015739). The putative short-chain reductase SAT3 may assist the PKS in some capacity (PubMed:25015739). SAT6 contains a secretory lipase domain and acts probably as a trichothecene esterase (PubMed:25015739). SAT5 encodes a putative acetyltransferase, and so, with SAT6, may affect endogenous protection from toxicity (PubMed:25015739). The probable transcription factor SAT9 may regulate the expression of the SC1 cluster (PubMed:25015739). SC2 encodes proteins SAT11 to SAT16, the largest of which encodes the putative reducing PKS SAT13 (PubMed:25015739). SAT11 is a cytochrome P450 monooxygenase, while SAT14 and SAT16 are probable acetyltransferases (PubMed:25015739). The SC2 cluster may be regulated by the transcription factor SAT15 (PubMed:25015739). SC3 is a small cluster that encodes 5 proteins, SAT17 to SAT21 (PubMed:25015739). SAT21 is a putative MFS-type transporter which may have a role in exporting secondary metabolites (PubMed:25015739). The four other proteins putatively encoded in SC3 include the taurine hydroxylase-like protein SAT17, the O-methyltransferase SAT18, the acetyltransferase SAT19, and the Cys6-type zinc finger SAT20, the latter being probably involved in regulation of SC3 expression (PubMed:25015739).</text>
</comment>
<comment type="subcellular location">
    <subcellularLocation>
        <location evidence="5">Cell membrane</location>
        <topology evidence="1">Multi-pass membrane protein</topology>
    </subcellularLocation>
</comment>
<comment type="miscellaneous">
    <text evidence="5">Trichothecenes are sesquiterpenoid toxins that act by inhibiting protein biosynthesis.</text>
</comment>
<comment type="similarity">
    <text evidence="5">Belongs to the major facilitator superfamily.</text>
</comment>
<evidence type="ECO:0000255" key="1"/>
<evidence type="ECO:0000255" key="2">
    <source>
        <dbReference type="PROSITE-ProRule" id="PRU00498"/>
    </source>
</evidence>
<evidence type="ECO:0000256" key="3">
    <source>
        <dbReference type="SAM" id="MobiDB-lite"/>
    </source>
</evidence>
<evidence type="ECO:0000303" key="4">
    <source>
    </source>
</evidence>
<evidence type="ECO:0000305" key="5"/>
<evidence type="ECO:0000305" key="6">
    <source>
    </source>
</evidence>
<feature type="chain" id="PRO_0000442418" description="MFS transporter SAT21">
    <location>
        <begin position="1"/>
        <end position="474"/>
    </location>
</feature>
<feature type="transmembrane region" description="Helical" evidence="1">
    <location>
        <begin position="7"/>
        <end position="27"/>
    </location>
</feature>
<feature type="transmembrane region" description="Helical" evidence="1">
    <location>
        <begin position="64"/>
        <end position="84"/>
    </location>
</feature>
<feature type="transmembrane region" description="Helical" evidence="1">
    <location>
        <begin position="101"/>
        <end position="121"/>
    </location>
</feature>
<feature type="transmembrane region" description="Helical" evidence="1">
    <location>
        <begin position="131"/>
        <end position="151"/>
    </location>
</feature>
<feature type="transmembrane region" description="Helical" evidence="1">
    <location>
        <begin position="162"/>
        <end position="182"/>
    </location>
</feature>
<feature type="transmembrane region" description="Helical" evidence="1">
    <location>
        <begin position="189"/>
        <end position="209"/>
    </location>
</feature>
<feature type="transmembrane region" description="Helical" evidence="1">
    <location>
        <begin position="276"/>
        <end position="296"/>
    </location>
</feature>
<feature type="transmembrane region" description="Helical" evidence="1">
    <location>
        <begin position="315"/>
        <end position="335"/>
    </location>
</feature>
<feature type="transmembrane region" description="Helical" evidence="1">
    <location>
        <begin position="346"/>
        <end position="366"/>
    </location>
</feature>
<feature type="transmembrane region" description="Helical" evidence="1">
    <location>
        <begin position="374"/>
        <end position="394"/>
    </location>
</feature>
<feature type="transmembrane region" description="Helical" evidence="1">
    <location>
        <begin position="406"/>
        <end position="426"/>
    </location>
</feature>
<feature type="transmembrane region" description="Helical" evidence="1">
    <location>
        <begin position="445"/>
        <end position="465"/>
    </location>
</feature>
<feature type="region of interest" description="Disordered" evidence="3">
    <location>
        <begin position="220"/>
        <end position="252"/>
    </location>
</feature>
<feature type="compositionally biased region" description="Polar residues" evidence="3">
    <location>
        <begin position="222"/>
        <end position="244"/>
    </location>
</feature>
<feature type="glycosylation site" description="N-linked (GlcNAc...) asparagine" evidence="2">
    <location>
        <position position="238"/>
    </location>
</feature>
<dbReference type="EMBL" id="KL648755">
    <property type="protein sequence ID" value="KEY64049.1"/>
    <property type="molecule type" value="Genomic_DNA"/>
</dbReference>
<dbReference type="SMR" id="A0A084AFH0"/>
<dbReference type="GlyCosmos" id="A0A084AFH0">
    <property type="glycosylation" value="1 site, No reported glycans"/>
</dbReference>
<dbReference type="HOGENOM" id="CLU_013756_2_1_1"/>
<dbReference type="OrthoDB" id="10180at5125"/>
<dbReference type="Proteomes" id="UP000028045">
    <property type="component" value="Unassembled WGS sequence"/>
</dbReference>
<dbReference type="GO" id="GO:0005886">
    <property type="term" value="C:plasma membrane"/>
    <property type="evidence" value="ECO:0007669"/>
    <property type="project" value="UniProtKB-SubCell"/>
</dbReference>
<dbReference type="GO" id="GO:0022857">
    <property type="term" value="F:transmembrane transporter activity"/>
    <property type="evidence" value="ECO:0007669"/>
    <property type="project" value="InterPro"/>
</dbReference>
<dbReference type="Gene3D" id="1.20.1250.20">
    <property type="entry name" value="MFS general substrate transporter like domains"/>
    <property type="match status" value="1"/>
</dbReference>
<dbReference type="InterPro" id="IPR011701">
    <property type="entry name" value="MFS"/>
</dbReference>
<dbReference type="InterPro" id="IPR036259">
    <property type="entry name" value="MFS_trans_sf"/>
</dbReference>
<dbReference type="PANTHER" id="PTHR23507:SF1">
    <property type="entry name" value="FI18259P1-RELATED"/>
    <property type="match status" value="1"/>
</dbReference>
<dbReference type="PANTHER" id="PTHR23507">
    <property type="entry name" value="ZGC:174356"/>
    <property type="match status" value="1"/>
</dbReference>
<dbReference type="Pfam" id="PF07690">
    <property type="entry name" value="MFS_1"/>
    <property type="match status" value="1"/>
</dbReference>
<dbReference type="SUPFAM" id="SSF103473">
    <property type="entry name" value="MFS general substrate transporter"/>
    <property type="match status" value="1"/>
</dbReference>
<reference key="1">
    <citation type="journal article" date="2014" name="BMC Genomics">
        <title>Comparative genome sequencing reveals chemotype-specific gene clusters in the toxigenic black mold Stachybotrys.</title>
        <authorList>
            <person name="Semeiks J."/>
            <person name="Borek D."/>
            <person name="Otwinowski Z."/>
            <person name="Grishin N.V."/>
        </authorList>
    </citation>
    <scope>NUCLEOTIDE SEQUENCE [LARGE SCALE GENOMIC DNA]</scope>
    <scope>IDENTIFICATION</scope>
    <scope>FUNCTION</scope>
    <source>
        <strain>CBS 109288 / IBT 7711</strain>
    </source>
</reference>
<sequence length="474" mass="51045">MLRNTHLVLPFILYLLFRLSHFLLEVPTVRMIELAACHQHLRLDHGPLNEAACKTPPVQEHVSLVVGWKMTFDSIPGLMSILYFGTLADKSGHRAILRLCCVGYLLAILWVLITCLFHQVFPVELVLLSSLFLFIGGGQLVFAAVITAFVADLFPPPSRTKFLFLLAAMPHMDKVASPALATKLMEQNLFLPSLVSMAIVVICVALLQMSDVGRETAASKVVGSTSDQTEPFLRSSSNSSQESGTAAPAIDPEQARGPFRQLKNIICWVHREPVLFICYLCFFLKSNAMASEAFIFQYLSEKFGWPLRETTVMRLALSSGAVISTLIICPLANATLHNRGVASARINIGAVHASSIVLVASFIMAWQASSSTAFIFSMLAAGFGEGLEPALQGVLAAASQTKAKGSIFALMCTCSLLGDMTGGPLMSALMSIGRGGNGVSDGYCFLASALVFGAVIVLAHLLWALGAEEMLGED</sequence>
<name>SAT21_STACB</name>
<gene>
    <name evidence="4" type="primary">SAT21</name>
    <name type="ORF">S7711_07411</name>
</gene>
<keyword id="KW-1003">Cell membrane</keyword>
<keyword id="KW-0325">Glycoprotein</keyword>
<keyword id="KW-0472">Membrane</keyword>
<keyword id="KW-0812">Transmembrane</keyword>
<keyword id="KW-1133">Transmembrane helix</keyword>
<keyword id="KW-0813">Transport</keyword>
<accession>A0A084AFH0</accession>
<organism>
    <name type="scientific">Stachybotrys chartarum (strain CBS 109288 / IBT 7711)</name>
    <name type="common">Toxic black mold</name>
    <name type="synonym">Stilbospora chartarum</name>
    <dbReference type="NCBI Taxonomy" id="1280523"/>
    <lineage>
        <taxon>Eukaryota</taxon>
        <taxon>Fungi</taxon>
        <taxon>Dikarya</taxon>
        <taxon>Ascomycota</taxon>
        <taxon>Pezizomycotina</taxon>
        <taxon>Sordariomycetes</taxon>
        <taxon>Hypocreomycetidae</taxon>
        <taxon>Hypocreales</taxon>
        <taxon>Stachybotryaceae</taxon>
        <taxon>Stachybotrys</taxon>
    </lineage>
</organism>
<proteinExistence type="inferred from homology"/>
<protein>
    <recommendedName>
        <fullName evidence="4">MFS transporter SAT21</fullName>
    </recommendedName>
    <alternativeName>
        <fullName evidence="4">Satratoxin biosynthesis SC3 cluster protein 216</fullName>
    </alternativeName>
</protein>